<protein>
    <recommendedName>
        <fullName evidence="1">Large ribosomal subunit protein bL36A</fullName>
    </recommendedName>
    <alternativeName>
        <fullName evidence="2">50S ribosomal protein L36 1</fullName>
    </alternativeName>
</protein>
<reference key="1">
    <citation type="journal article" date="2007" name="Nat. Biotechnol.">
        <title>Complete genome sequence of the erythromycin-producing bacterium Saccharopolyspora erythraea NRRL23338.</title>
        <authorList>
            <person name="Oliynyk M."/>
            <person name="Samborskyy M."/>
            <person name="Lester J.B."/>
            <person name="Mironenko T."/>
            <person name="Scott N."/>
            <person name="Dickens S."/>
            <person name="Haydock S.F."/>
            <person name="Leadlay P.F."/>
        </authorList>
    </citation>
    <scope>NUCLEOTIDE SEQUENCE [LARGE SCALE GENOMIC DNA]</scope>
    <source>
        <strain>ATCC 11635 / DSM 40517 / JCM 4748 / NBRC 13426 / NCIMB 8594 / NRRL 2338</strain>
    </source>
</reference>
<name>RL361_SACEN</name>
<comment type="similarity">
    <text evidence="1">Belongs to the bacterial ribosomal protein bL36 family.</text>
</comment>
<feature type="chain" id="PRO_0000344714" description="Large ribosomal subunit protein bL36A">
    <location>
        <begin position="1"/>
        <end position="40"/>
    </location>
</feature>
<evidence type="ECO:0000255" key="1">
    <source>
        <dbReference type="HAMAP-Rule" id="MF_00251"/>
    </source>
</evidence>
<evidence type="ECO:0000305" key="2"/>
<proteinExistence type="inferred from homology"/>
<accession>A4FIM1</accession>
<gene>
    <name evidence="1" type="primary">rpmJ1</name>
    <name type="ordered locus">SACE_4627</name>
</gene>
<sequence length="40" mass="4697">MKVRASLKSLKDKDGSQVVRRRGKLYVVNKRNPRWKGRQG</sequence>
<dbReference type="EMBL" id="AM420293">
    <property type="protein sequence ID" value="CAM03896.1"/>
    <property type="molecule type" value="Genomic_DNA"/>
</dbReference>
<dbReference type="SMR" id="A4FIM1"/>
<dbReference type="STRING" id="405948.SACE_4627"/>
<dbReference type="KEGG" id="sen:SACE_4627"/>
<dbReference type="eggNOG" id="COG0257">
    <property type="taxonomic scope" value="Bacteria"/>
</dbReference>
<dbReference type="HOGENOM" id="CLU_135723_3_1_11"/>
<dbReference type="OrthoDB" id="9801558at2"/>
<dbReference type="Proteomes" id="UP000006728">
    <property type="component" value="Chromosome"/>
</dbReference>
<dbReference type="GO" id="GO:1990904">
    <property type="term" value="C:ribonucleoprotein complex"/>
    <property type="evidence" value="ECO:0007669"/>
    <property type="project" value="UniProtKB-KW"/>
</dbReference>
<dbReference type="GO" id="GO:0005840">
    <property type="term" value="C:ribosome"/>
    <property type="evidence" value="ECO:0007669"/>
    <property type="project" value="UniProtKB-KW"/>
</dbReference>
<dbReference type="GO" id="GO:0003735">
    <property type="term" value="F:structural constituent of ribosome"/>
    <property type="evidence" value="ECO:0007669"/>
    <property type="project" value="InterPro"/>
</dbReference>
<dbReference type="GO" id="GO:0006412">
    <property type="term" value="P:translation"/>
    <property type="evidence" value="ECO:0007669"/>
    <property type="project" value="UniProtKB-UniRule"/>
</dbReference>
<dbReference type="HAMAP" id="MF_00251">
    <property type="entry name" value="Ribosomal_bL36"/>
    <property type="match status" value="1"/>
</dbReference>
<dbReference type="InterPro" id="IPR000473">
    <property type="entry name" value="Ribosomal_bL36"/>
</dbReference>
<dbReference type="InterPro" id="IPR035977">
    <property type="entry name" value="Ribosomal_bL36_sp"/>
</dbReference>
<dbReference type="InterPro" id="IPR047621">
    <property type="entry name" value="Ribosomal_L36_bact"/>
</dbReference>
<dbReference type="NCBIfam" id="NF002021">
    <property type="entry name" value="PRK00831.1"/>
    <property type="match status" value="1"/>
</dbReference>
<dbReference type="NCBIfam" id="TIGR01022">
    <property type="entry name" value="rpmJ_bact"/>
    <property type="match status" value="1"/>
</dbReference>
<dbReference type="PANTHER" id="PTHR47781">
    <property type="entry name" value="50S RIBOSOMAL PROTEIN L36 2"/>
    <property type="match status" value="1"/>
</dbReference>
<dbReference type="PANTHER" id="PTHR47781:SF1">
    <property type="entry name" value="LARGE RIBOSOMAL SUBUNIT PROTEIN BL36B"/>
    <property type="match status" value="1"/>
</dbReference>
<dbReference type="Pfam" id="PF00444">
    <property type="entry name" value="Ribosomal_L36"/>
    <property type="match status" value="1"/>
</dbReference>
<dbReference type="SUPFAM" id="SSF57840">
    <property type="entry name" value="Ribosomal protein L36"/>
    <property type="match status" value="1"/>
</dbReference>
<keyword id="KW-1185">Reference proteome</keyword>
<keyword id="KW-0687">Ribonucleoprotein</keyword>
<keyword id="KW-0689">Ribosomal protein</keyword>
<organism>
    <name type="scientific">Saccharopolyspora erythraea (strain ATCC 11635 / DSM 40517 / JCM 4748 / NBRC 13426 / NCIMB 8594 / NRRL 2338)</name>
    <dbReference type="NCBI Taxonomy" id="405948"/>
    <lineage>
        <taxon>Bacteria</taxon>
        <taxon>Bacillati</taxon>
        <taxon>Actinomycetota</taxon>
        <taxon>Actinomycetes</taxon>
        <taxon>Pseudonocardiales</taxon>
        <taxon>Pseudonocardiaceae</taxon>
        <taxon>Saccharopolyspora</taxon>
    </lineage>
</organism>